<gene>
    <name type="ordered locus">USA300HOU_1693</name>
</gene>
<comment type="similarity">
    <text evidence="1">Belongs to the UPF0173 family.</text>
</comment>
<organism>
    <name type="scientific">Staphylococcus aureus (strain USA300 / TCH1516)</name>
    <dbReference type="NCBI Taxonomy" id="451516"/>
    <lineage>
        <taxon>Bacteria</taxon>
        <taxon>Bacillati</taxon>
        <taxon>Bacillota</taxon>
        <taxon>Bacilli</taxon>
        <taxon>Bacillales</taxon>
        <taxon>Staphylococcaceae</taxon>
        <taxon>Staphylococcus</taxon>
    </lineage>
</organism>
<feature type="chain" id="PRO_1000081129" description="UPF0173 metal-dependent hydrolase USA300HOU_1693">
    <location>
        <begin position="1"/>
        <end position="229"/>
    </location>
</feature>
<evidence type="ECO:0000255" key="1">
    <source>
        <dbReference type="HAMAP-Rule" id="MF_00457"/>
    </source>
</evidence>
<reference key="1">
    <citation type="journal article" date="2007" name="BMC Microbiol.">
        <title>Subtle genetic changes enhance virulence of methicillin resistant and sensitive Staphylococcus aureus.</title>
        <authorList>
            <person name="Highlander S.K."/>
            <person name="Hulten K.G."/>
            <person name="Qin X."/>
            <person name="Jiang H."/>
            <person name="Yerrapragada S."/>
            <person name="Mason E.O. Jr."/>
            <person name="Shang Y."/>
            <person name="Williams T.M."/>
            <person name="Fortunov R.M."/>
            <person name="Liu Y."/>
            <person name="Igboeli O."/>
            <person name="Petrosino J."/>
            <person name="Tirumalai M."/>
            <person name="Uzman A."/>
            <person name="Fox G.E."/>
            <person name="Cardenas A.M."/>
            <person name="Muzny D.M."/>
            <person name="Hemphill L."/>
            <person name="Ding Y."/>
            <person name="Dugan S."/>
            <person name="Blyth P.R."/>
            <person name="Buhay C.J."/>
            <person name="Dinh H.H."/>
            <person name="Hawes A.C."/>
            <person name="Holder M."/>
            <person name="Kovar C.L."/>
            <person name="Lee S.L."/>
            <person name="Liu W."/>
            <person name="Nazareth L.V."/>
            <person name="Wang Q."/>
            <person name="Zhou J."/>
            <person name="Kaplan S.L."/>
            <person name="Weinstock G.M."/>
        </authorList>
    </citation>
    <scope>NUCLEOTIDE SEQUENCE [LARGE SCALE GENOMIC DNA]</scope>
    <source>
        <strain>USA300 / TCH1516</strain>
    </source>
</reference>
<sequence length="229" mass="25251">MKLSFHGQSTIYLEGNNKKVIVDPFISNNPKCDLNIETVQVDYIVLTHGHFDHFGDVVELAKKTGATVIGSAEMADYLSSYHGVENVHGMNIGGKANFDFGSVKFVQAFHSSSFTHENGIPVYLGMPMGIVFEVEGKTIYHTGDTGLFSDMSLIAKRHPVDVCFVPIGDNFTMGIDDASYAINEFIKPKISVPIHYDTFPLIEQDPQQFKDAVNVGDVQILKPGESVQF</sequence>
<protein>
    <recommendedName>
        <fullName evidence="1">UPF0173 metal-dependent hydrolase USA300HOU_1693</fullName>
    </recommendedName>
</protein>
<proteinExistence type="inferred from homology"/>
<dbReference type="EMBL" id="CP000730">
    <property type="protein sequence ID" value="ABX29700.1"/>
    <property type="molecule type" value="Genomic_DNA"/>
</dbReference>
<dbReference type="RefSeq" id="WP_000777188.1">
    <property type="nucleotide sequence ID" value="NC_010079.1"/>
</dbReference>
<dbReference type="SMR" id="A8Z2M2"/>
<dbReference type="KEGG" id="sax:USA300HOU_1693"/>
<dbReference type="HOGENOM" id="CLU_070010_4_1_9"/>
<dbReference type="BioCyc" id="SAUR451516-HMP:GTV5-1713-MONOMER"/>
<dbReference type="GO" id="GO:0016787">
    <property type="term" value="F:hydrolase activity"/>
    <property type="evidence" value="ECO:0007669"/>
    <property type="project" value="UniProtKB-UniRule"/>
</dbReference>
<dbReference type="CDD" id="cd06262">
    <property type="entry name" value="metallo-hydrolase-like_MBL-fold"/>
    <property type="match status" value="1"/>
</dbReference>
<dbReference type="Gene3D" id="3.60.15.10">
    <property type="entry name" value="Ribonuclease Z/Hydroxyacylglutathione hydrolase-like"/>
    <property type="match status" value="1"/>
</dbReference>
<dbReference type="HAMAP" id="MF_00457">
    <property type="entry name" value="UPF0173"/>
    <property type="match status" value="1"/>
</dbReference>
<dbReference type="InterPro" id="IPR001279">
    <property type="entry name" value="Metallo-B-lactamas"/>
</dbReference>
<dbReference type="InterPro" id="IPR036866">
    <property type="entry name" value="RibonucZ/Hydroxyglut_hydro"/>
</dbReference>
<dbReference type="InterPro" id="IPR022877">
    <property type="entry name" value="UPF0173"/>
</dbReference>
<dbReference type="InterPro" id="IPR050114">
    <property type="entry name" value="UPF0173_UPF0282_UlaG_hydrolase"/>
</dbReference>
<dbReference type="NCBIfam" id="NF001911">
    <property type="entry name" value="PRK00685.1"/>
    <property type="match status" value="1"/>
</dbReference>
<dbReference type="PANTHER" id="PTHR43546:SF3">
    <property type="entry name" value="UPF0173 METAL-DEPENDENT HYDROLASE MJ1163"/>
    <property type="match status" value="1"/>
</dbReference>
<dbReference type="PANTHER" id="PTHR43546">
    <property type="entry name" value="UPF0173 METAL-DEPENDENT HYDROLASE MJ1163-RELATED"/>
    <property type="match status" value="1"/>
</dbReference>
<dbReference type="Pfam" id="PF12706">
    <property type="entry name" value="Lactamase_B_2"/>
    <property type="match status" value="1"/>
</dbReference>
<dbReference type="SMART" id="SM00849">
    <property type="entry name" value="Lactamase_B"/>
    <property type="match status" value="1"/>
</dbReference>
<dbReference type="SUPFAM" id="SSF56281">
    <property type="entry name" value="Metallo-hydrolase/oxidoreductase"/>
    <property type="match status" value="1"/>
</dbReference>
<name>Y1693_STAAT</name>
<keyword id="KW-0378">Hydrolase</keyword>
<accession>A8Z2M2</accession>